<sequence>METPFYGDEALSGLGGGASGSGGSFASPGRLFPGAPPTAAAGSMMKKDALTLSLSEQVAAALKPAAAPPPTPLRADGAPSAAPPDGLLASPDLGLLKLASPELERLIIQSNGLVTTTPTSSQFLYPKVAASEEQEFAEGFVKALEDLHKQNQLGAGAAAAAAAAAAGGPSGTATGSAPPGELAPAAAAPEAPVYANLSSYAGGAGGAGGAATVAFAAEPVPFPPPPPPGALGPPRLAALKDEPQTVPDVPSFGESPPLSPIDMDTQERIKAERKRLRNRIAASKCRKRKLERISRLEEKVKTLKSQNTELASTASLLREQVAQLKQKVLSHVNSGCQLLPQHQVPAY</sequence>
<feature type="chain" id="PRO_0000076442" description="Transcription factor JunD">
    <location>
        <begin position="1"/>
        <end position="347"/>
    </location>
</feature>
<feature type="domain" description="bZIP" evidence="2">
    <location>
        <begin position="268"/>
        <end position="331"/>
    </location>
</feature>
<feature type="region of interest" description="Disordered" evidence="3">
    <location>
        <begin position="1"/>
        <end position="43"/>
    </location>
</feature>
<feature type="region of interest" description="Disordered" evidence="3">
    <location>
        <begin position="62"/>
        <end position="86"/>
    </location>
</feature>
<feature type="region of interest" description="Disordered" evidence="3">
    <location>
        <begin position="244"/>
        <end position="264"/>
    </location>
</feature>
<feature type="region of interest" description="Basic motif" evidence="2">
    <location>
        <begin position="268"/>
        <end position="295"/>
    </location>
</feature>
<feature type="region of interest" description="Leucine-zipper" evidence="2">
    <location>
        <begin position="296"/>
        <end position="324"/>
    </location>
</feature>
<feature type="short sequence motif" description="Menin-binding motif (MBM)" evidence="4">
    <location>
        <begin position="27"/>
        <end position="39"/>
    </location>
</feature>
<feature type="short sequence motif" description="MAP kinase docking motif; essential for its phosphorylation" evidence="4">
    <location>
        <begin position="46"/>
        <end position="55"/>
    </location>
</feature>
<feature type="compositionally biased region" description="Gly residues" evidence="3">
    <location>
        <begin position="13"/>
        <end position="23"/>
    </location>
</feature>
<feature type="compositionally biased region" description="Low complexity" evidence="3">
    <location>
        <begin position="73"/>
        <end position="86"/>
    </location>
</feature>
<feature type="modified residue" description="Phosphoserine" evidence="4">
    <location>
        <position position="90"/>
    </location>
</feature>
<feature type="modified residue" description="Phosphoserine; by MAPK8" evidence="4">
    <location>
        <position position="100"/>
    </location>
</feature>
<feature type="modified residue" description="Phosphothreonine" evidence="4">
    <location>
        <position position="117"/>
    </location>
</feature>
<feature type="modified residue" description="Phosphoserine" evidence="16">
    <location>
        <position position="251"/>
    </location>
</feature>
<feature type="modified residue" description="Phosphoserine" evidence="16 17 18 20">
    <location>
        <position position="255"/>
    </location>
</feature>
<feature type="modified residue" description="Phosphoserine" evidence="16 17 18 19">
    <location>
        <position position="259"/>
    </location>
</feature>
<feature type="disulfide bond" description="Interchain (with C-172 in FOSB)" evidence="5 10 11 12 13">
    <location>
        <position position="285"/>
    </location>
</feature>
<feature type="sequence variant" id="VAR_055247" description="In dbSNP:rs41478151." evidence="7">
    <original>G</original>
    <variation>V</variation>
    <location>
        <position position="20"/>
    </location>
</feature>
<feature type="mutagenesis site" description="Reduced interaction with MEN1." evidence="4">
    <original>R</original>
    <variation>A</variation>
    <location>
        <position position="30"/>
    </location>
</feature>
<feature type="mutagenesis site" description="Reduced interaction with MEN1." evidence="4">
    <original>L</original>
    <variation>A</variation>
    <location>
        <position position="31"/>
    </location>
</feature>
<feature type="mutagenesis site" description="Loss of interaction with MEN1." evidence="4">
    <original>F</original>
    <variation>A</variation>
    <location>
        <position position="32"/>
    </location>
</feature>
<feature type="mutagenesis site" description="Loss of interaction with MEN1." evidence="4">
    <original>P</original>
    <variation>A</variation>
    <location>
        <position position="33"/>
    </location>
</feature>
<feature type="mutagenesis site" description="Loss of interaction with MEN1." evidence="4">
    <original>G</original>
    <variation>R</variation>
    <location>
        <position position="34"/>
    </location>
</feature>
<feature type="mutagenesis site" description="Reduced interaction with MEN1." evidence="4">
    <original>A</original>
    <variation>R</variation>
    <location>
        <position position="35"/>
    </location>
</feature>
<feature type="mutagenesis site" description="Reduced interaction with MEN1." evidence="4">
    <original>P</original>
    <variation>A</variation>
    <location>
        <position position="36"/>
    </location>
</feature>
<feature type="mutagenesis site" description="Reduced interaction with MEN1." evidence="4">
    <original>P</original>
    <variation>A</variation>
    <location>
        <position position="37"/>
    </location>
</feature>
<feature type="mutagenesis site" description="Loss of phosphorylation; when associated with A-47." evidence="4">
    <original>K</original>
    <variation>A</variation>
    <location>
        <position position="46"/>
    </location>
</feature>
<feature type="mutagenesis site" description="Reduced interaction with MEN1; when associated with E-47." evidence="4">
    <original>K</original>
    <variation>E</variation>
    <location>
        <position position="46"/>
    </location>
</feature>
<feature type="mutagenesis site" description="Loss of phosphorylation; when associated with A-46." evidence="4">
    <original>K</original>
    <variation>A</variation>
    <location>
        <position position="47"/>
    </location>
</feature>
<feature type="mutagenesis site" description="Reduced interaction with MEN1; when associated with E-46." evidence="4">
    <original>K</original>
    <variation>E</variation>
    <location>
        <position position="47"/>
    </location>
</feature>
<feature type="mutagenesis site" description="Loss of phosphorylation; when associated with A-54." evidence="4">
    <original>L</original>
    <variation>A</variation>
    <location>
        <position position="52"/>
    </location>
</feature>
<feature type="mutagenesis site" description="Loss of phosphorylation; when associated with A-52." evidence="4">
    <original>L</original>
    <variation>A</variation>
    <location>
        <position position="54"/>
    </location>
</feature>
<feature type="sequence conflict" description="In Ref. 1; CAA40010." evidence="8" ref="1">
    <original>S</original>
    <variation>T</variation>
    <location>
        <position position="24"/>
    </location>
</feature>
<feature type="sequence conflict" description="In Ref. 1; CAA40010." evidence="8" ref="1">
    <original>A</original>
    <variation>R</variation>
    <location>
        <position position="157"/>
    </location>
</feature>
<feature type="helix" evidence="21">
    <location>
        <begin position="266"/>
        <end position="329"/>
    </location>
</feature>
<accession>P17535</accession>
<accession>Q53EK9</accession>
<evidence type="ECO:0000250" key="1">
    <source>
        <dbReference type="UniProtKB" id="P13346"/>
    </source>
</evidence>
<evidence type="ECO:0000255" key="2">
    <source>
        <dbReference type="PROSITE-ProRule" id="PRU00978"/>
    </source>
</evidence>
<evidence type="ECO:0000256" key="3">
    <source>
        <dbReference type="SAM" id="MobiDB-lite"/>
    </source>
</evidence>
<evidence type="ECO:0000269" key="4">
    <source>
    </source>
</evidence>
<evidence type="ECO:0000269" key="5">
    <source>
    </source>
</evidence>
<evidence type="ECO:0000269" key="6">
    <source>
    </source>
</evidence>
<evidence type="ECO:0000269" key="7">
    <source ref="2"/>
</evidence>
<evidence type="ECO:0000305" key="8"/>
<evidence type="ECO:0007744" key="9">
    <source>
        <dbReference type="PDB" id="3U86"/>
    </source>
</evidence>
<evidence type="ECO:0007744" key="10">
    <source>
        <dbReference type="PDB" id="5VPA"/>
    </source>
</evidence>
<evidence type="ECO:0007744" key="11">
    <source>
        <dbReference type="PDB" id="5VPB"/>
    </source>
</evidence>
<evidence type="ECO:0007744" key="12">
    <source>
        <dbReference type="PDB" id="5VPC"/>
    </source>
</evidence>
<evidence type="ECO:0007744" key="13">
    <source>
        <dbReference type="PDB" id="5VPD"/>
    </source>
</evidence>
<evidence type="ECO:0007744" key="14">
    <source>
        <dbReference type="PDB" id="5VPE"/>
    </source>
</evidence>
<evidence type="ECO:0007744" key="15">
    <source>
        <dbReference type="PDB" id="5VPF"/>
    </source>
</evidence>
<evidence type="ECO:0007744" key="16">
    <source>
    </source>
</evidence>
<evidence type="ECO:0007744" key="17">
    <source>
    </source>
</evidence>
<evidence type="ECO:0007744" key="18">
    <source>
    </source>
</evidence>
<evidence type="ECO:0007744" key="19">
    <source>
    </source>
</evidence>
<evidence type="ECO:0007744" key="20">
    <source>
    </source>
</evidence>
<evidence type="ECO:0007829" key="21">
    <source>
        <dbReference type="PDB" id="7UCC"/>
    </source>
</evidence>
<dbReference type="EMBL" id="X56681">
    <property type="protein sequence ID" value="CAA40010.1"/>
    <property type="status" value="ALT_FRAME"/>
    <property type="molecule type" value="mRNA"/>
</dbReference>
<dbReference type="EMBL" id="EF044249">
    <property type="protein sequence ID" value="ABJ53425.1"/>
    <property type="molecule type" value="Genomic_DNA"/>
</dbReference>
<dbReference type="EMBL" id="AK223630">
    <property type="protein sequence ID" value="BAD97350.1"/>
    <property type="molecule type" value="mRNA"/>
</dbReference>
<dbReference type="EMBL" id="CH471106">
    <property type="protein sequence ID" value="EAW84684.1"/>
    <property type="molecule type" value="Genomic_DNA"/>
</dbReference>
<dbReference type="EMBL" id="X51346">
    <property type="protein sequence ID" value="CAA35739.1"/>
    <property type="molecule type" value="mRNA"/>
</dbReference>
<dbReference type="CCDS" id="CCDS32959.1"/>
<dbReference type="PIR" id="A43815">
    <property type="entry name" value="A43815"/>
</dbReference>
<dbReference type="PIR" id="S10184">
    <property type="entry name" value="TVHUJD"/>
</dbReference>
<dbReference type="RefSeq" id="NP_001273897.1">
    <property type="nucleotide sequence ID" value="NM_001286968.1"/>
</dbReference>
<dbReference type="RefSeq" id="NP_005345.3">
    <property type="nucleotide sequence ID" value="NM_005354.5"/>
</dbReference>
<dbReference type="PDB" id="3U86">
    <property type="method" value="X-ray"/>
    <property type="resolution" value="2.84 A"/>
    <property type="chains" value="B=27-39"/>
</dbReference>
<dbReference type="PDB" id="5VPA">
    <property type="method" value="X-ray"/>
    <property type="resolution" value="2.83 A"/>
    <property type="chains" value="B=266-332"/>
</dbReference>
<dbReference type="PDB" id="5VPB">
    <property type="method" value="X-ray"/>
    <property type="resolution" value="2.69 A"/>
    <property type="chains" value="B/D=266-332"/>
</dbReference>
<dbReference type="PDB" id="5VPC">
    <property type="method" value="X-ray"/>
    <property type="resolution" value="2.50 A"/>
    <property type="chains" value="B/D=266-332"/>
</dbReference>
<dbReference type="PDB" id="5VPD">
    <property type="method" value="X-ray"/>
    <property type="resolution" value="2.79 A"/>
    <property type="chains" value="B/D=266-332"/>
</dbReference>
<dbReference type="PDB" id="5VPE">
    <property type="method" value="X-ray"/>
    <property type="resolution" value="2.05 A"/>
    <property type="chains" value="B/D=266-332"/>
</dbReference>
<dbReference type="PDB" id="5VPF">
    <property type="method" value="X-ray"/>
    <property type="resolution" value="2.69 A"/>
    <property type="chains" value="B/D=266-332"/>
</dbReference>
<dbReference type="PDB" id="7UCC">
    <property type="method" value="X-ray"/>
    <property type="resolution" value="1.94 A"/>
    <property type="chains" value="J=266-332"/>
</dbReference>
<dbReference type="PDB" id="7UCD">
    <property type="method" value="X-ray"/>
    <property type="resolution" value="3.21 A"/>
    <property type="chains" value="J=266-332"/>
</dbReference>
<dbReference type="PDBsum" id="3U86"/>
<dbReference type="PDBsum" id="5VPA"/>
<dbReference type="PDBsum" id="5VPB"/>
<dbReference type="PDBsum" id="5VPC"/>
<dbReference type="PDBsum" id="5VPD"/>
<dbReference type="PDBsum" id="5VPE"/>
<dbReference type="PDBsum" id="5VPF"/>
<dbReference type="PDBsum" id="7UCC"/>
<dbReference type="PDBsum" id="7UCD"/>
<dbReference type="SMR" id="P17535"/>
<dbReference type="BioGRID" id="109930">
    <property type="interactions" value="78"/>
</dbReference>
<dbReference type="ComplexPortal" id="CPX-497">
    <property type="entry name" value="Menin-JUND transcription inhibition complex"/>
</dbReference>
<dbReference type="ComplexPortal" id="CPX-6422">
    <property type="entry name" value="bZIP transcription factor complex, ATF2-JUND"/>
</dbReference>
<dbReference type="ComplexPortal" id="CPX-6788">
    <property type="entry name" value="bZIP transcription factor complex, ATF7-JUND"/>
</dbReference>
<dbReference type="ComplexPortal" id="CPX-7013">
    <property type="entry name" value="bZIP transcription factor complex, BATF-JUND"/>
</dbReference>
<dbReference type="ComplexPortal" id="CPX-7102">
    <property type="entry name" value="bZIP transcription factor complex, BATF3-JUND"/>
</dbReference>
<dbReference type="CORUM" id="P17535"/>
<dbReference type="DIP" id="DIP-1053N"/>
<dbReference type="FunCoup" id="P17535">
    <property type="interactions" value="2822"/>
</dbReference>
<dbReference type="IntAct" id="P17535">
    <property type="interactions" value="44"/>
</dbReference>
<dbReference type="MINT" id="P17535"/>
<dbReference type="STRING" id="9606.ENSP00000252818"/>
<dbReference type="BindingDB" id="P17535"/>
<dbReference type="ChEMBL" id="CHEMBL4630755"/>
<dbReference type="GlyCosmos" id="P17535">
    <property type="glycosylation" value="4 sites, 2 glycans"/>
</dbReference>
<dbReference type="GlyGen" id="P17535">
    <property type="glycosylation" value="7 sites, 2 O-linked glycans (5 sites)"/>
</dbReference>
<dbReference type="iPTMnet" id="P17535"/>
<dbReference type="PhosphoSitePlus" id="P17535"/>
<dbReference type="BioMuta" id="JUND"/>
<dbReference type="DMDM" id="229462969"/>
<dbReference type="jPOST" id="P17535"/>
<dbReference type="MassIVE" id="P17535"/>
<dbReference type="PaxDb" id="9606-ENSP00000252818"/>
<dbReference type="PeptideAtlas" id="P17535"/>
<dbReference type="ProteomicsDB" id="53481"/>
<dbReference type="Pumba" id="P17535"/>
<dbReference type="Antibodypedia" id="3936">
    <property type="antibodies" value="657 antibodies from 40 providers"/>
</dbReference>
<dbReference type="DNASU" id="3727"/>
<dbReference type="Ensembl" id="ENST00000252818.5">
    <property type="protein sequence ID" value="ENSP00000252818.3"/>
    <property type="gene ID" value="ENSG00000130522.6"/>
</dbReference>
<dbReference type="GeneID" id="3727"/>
<dbReference type="KEGG" id="hsa:3727"/>
<dbReference type="MANE-Select" id="ENST00000252818.5">
    <property type="protein sequence ID" value="ENSP00000252818.3"/>
    <property type="RefSeq nucleotide sequence ID" value="NM_005354.6"/>
    <property type="RefSeq protein sequence ID" value="NP_005345.3"/>
</dbReference>
<dbReference type="UCSC" id="uc002nip.4">
    <property type="organism name" value="human"/>
</dbReference>
<dbReference type="AGR" id="HGNC:6206"/>
<dbReference type="CTD" id="3727"/>
<dbReference type="DisGeNET" id="3727"/>
<dbReference type="GeneCards" id="JUND"/>
<dbReference type="HGNC" id="HGNC:6206">
    <property type="gene designation" value="JUND"/>
</dbReference>
<dbReference type="HPA" id="ENSG00000130522">
    <property type="expression patterns" value="Low tissue specificity"/>
</dbReference>
<dbReference type="MIM" id="165162">
    <property type="type" value="gene"/>
</dbReference>
<dbReference type="neXtProt" id="NX_P17535"/>
<dbReference type="OpenTargets" id="ENSG00000130522"/>
<dbReference type="PharmGKB" id="PA30008"/>
<dbReference type="VEuPathDB" id="HostDB:ENSG00000130522"/>
<dbReference type="eggNOG" id="KOG0837">
    <property type="taxonomic scope" value="Eukaryota"/>
</dbReference>
<dbReference type="GeneTree" id="ENSGT00940000162806"/>
<dbReference type="HOGENOM" id="CLU_057007_0_0_1"/>
<dbReference type="InParanoid" id="P17535"/>
<dbReference type="OMA" id="PFFDGTM"/>
<dbReference type="OrthoDB" id="2187714at2759"/>
<dbReference type="PAN-GO" id="P17535">
    <property type="GO annotations" value="7 GO annotations based on evolutionary models"/>
</dbReference>
<dbReference type="PhylomeDB" id="P17535"/>
<dbReference type="TreeFam" id="TF323952"/>
<dbReference type="PathwayCommons" id="P17535"/>
<dbReference type="Reactome" id="R-HSA-9018519">
    <property type="pathway name" value="Estrogen-dependent gene expression"/>
</dbReference>
<dbReference type="Reactome" id="R-HSA-9031628">
    <property type="pathway name" value="NGF-stimulated transcription"/>
</dbReference>
<dbReference type="SignaLink" id="P17535"/>
<dbReference type="SIGNOR" id="P17535"/>
<dbReference type="BioGRID-ORCS" id="3727">
    <property type="hits" value="29 hits in 1185 CRISPR screens"/>
</dbReference>
<dbReference type="ChiTaRS" id="JUND">
    <property type="organism name" value="human"/>
</dbReference>
<dbReference type="EvolutionaryTrace" id="P17535"/>
<dbReference type="GeneWiki" id="JunD"/>
<dbReference type="GenomeRNAi" id="3727"/>
<dbReference type="Pharos" id="P17535">
    <property type="development level" value="Tbio"/>
</dbReference>
<dbReference type="PRO" id="PR:P17535"/>
<dbReference type="Proteomes" id="UP000005640">
    <property type="component" value="Chromosome 19"/>
</dbReference>
<dbReference type="RNAct" id="P17535">
    <property type="molecule type" value="protein"/>
</dbReference>
<dbReference type="Bgee" id="ENSG00000130522">
    <property type="expression patterns" value="Expressed in cardia of stomach and 207 other cell types or tissues"/>
</dbReference>
<dbReference type="ExpressionAtlas" id="P17535">
    <property type="expression patterns" value="baseline and differential"/>
</dbReference>
<dbReference type="GO" id="GO:0000785">
    <property type="term" value="C:chromatin"/>
    <property type="evidence" value="ECO:0000247"/>
    <property type="project" value="NTNU_SB"/>
</dbReference>
<dbReference type="GO" id="GO:0005654">
    <property type="term" value="C:nucleoplasm"/>
    <property type="evidence" value="ECO:0000314"/>
    <property type="project" value="HPA"/>
</dbReference>
<dbReference type="GO" id="GO:0005634">
    <property type="term" value="C:nucleus"/>
    <property type="evidence" value="ECO:0000303"/>
    <property type="project" value="ComplexPortal"/>
</dbReference>
<dbReference type="GO" id="GO:0032993">
    <property type="term" value="C:protein-DNA complex"/>
    <property type="evidence" value="ECO:0007669"/>
    <property type="project" value="Ensembl"/>
</dbReference>
<dbReference type="GO" id="GO:0090575">
    <property type="term" value="C:RNA polymerase II transcription regulator complex"/>
    <property type="evidence" value="ECO:0000353"/>
    <property type="project" value="ComplexPortal"/>
</dbReference>
<dbReference type="GO" id="GO:0035976">
    <property type="term" value="C:transcription factor AP-1 complex"/>
    <property type="evidence" value="ECO:0000314"/>
    <property type="project" value="CAFA"/>
</dbReference>
<dbReference type="GO" id="GO:0005667">
    <property type="term" value="C:transcription regulator complex"/>
    <property type="evidence" value="ECO:0000318"/>
    <property type="project" value="GO_Central"/>
</dbReference>
<dbReference type="GO" id="GO:0017053">
    <property type="term" value="C:transcription repressor complex"/>
    <property type="evidence" value="ECO:0000353"/>
    <property type="project" value="ComplexPortal"/>
</dbReference>
<dbReference type="GO" id="GO:0001228">
    <property type="term" value="F:DNA-binding transcription activator activity, RNA polymerase II-specific"/>
    <property type="evidence" value="ECO:0007669"/>
    <property type="project" value="Ensembl"/>
</dbReference>
<dbReference type="GO" id="GO:0000981">
    <property type="term" value="F:DNA-binding transcription factor activity, RNA polymerase II-specific"/>
    <property type="evidence" value="ECO:0000247"/>
    <property type="project" value="NTNU_SB"/>
</dbReference>
<dbReference type="GO" id="GO:0019899">
    <property type="term" value="F:enzyme binding"/>
    <property type="evidence" value="ECO:0000353"/>
    <property type="project" value="UniProtKB"/>
</dbReference>
<dbReference type="GO" id="GO:0016922">
    <property type="term" value="F:nuclear receptor binding"/>
    <property type="evidence" value="ECO:0007669"/>
    <property type="project" value="Ensembl"/>
</dbReference>
<dbReference type="GO" id="GO:0000978">
    <property type="term" value="F:RNA polymerase II cis-regulatory region sequence-specific DNA binding"/>
    <property type="evidence" value="ECO:0000318"/>
    <property type="project" value="GO_Central"/>
</dbReference>
<dbReference type="GO" id="GO:1990837">
    <property type="term" value="F:sequence-specific double-stranded DNA binding"/>
    <property type="evidence" value="ECO:0000314"/>
    <property type="project" value="ARUK-UCL"/>
</dbReference>
<dbReference type="GO" id="GO:0000976">
    <property type="term" value="F:transcription cis-regulatory region binding"/>
    <property type="evidence" value="ECO:0000314"/>
    <property type="project" value="UniProtKB"/>
</dbReference>
<dbReference type="GO" id="GO:0003713">
    <property type="term" value="F:transcription coactivator activity"/>
    <property type="evidence" value="ECO:0007669"/>
    <property type="project" value="Ensembl"/>
</dbReference>
<dbReference type="GO" id="GO:0001221">
    <property type="term" value="F:transcription coregulator binding"/>
    <property type="evidence" value="ECO:0007669"/>
    <property type="project" value="Ensembl"/>
</dbReference>
<dbReference type="GO" id="GO:0071277">
    <property type="term" value="P:cellular response to calcium ion"/>
    <property type="evidence" value="ECO:0007669"/>
    <property type="project" value="Ensembl"/>
</dbReference>
<dbReference type="GO" id="GO:0071398">
    <property type="term" value="P:cellular response to fatty acid"/>
    <property type="evidence" value="ECO:0007669"/>
    <property type="project" value="Ensembl"/>
</dbReference>
<dbReference type="GO" id="GO:0071456">
    <property type="term" value="P:cellular response to hypoxia"/>
    <property type="evidence" value="ECO:0007669"/>
    <property type="project" value="Ensembl"/>
</dbReference>
<dbReference type="GO" id="GO:0007623">
    <property type="term" value="P:circadian rhythm"/>
    <property type="evidence" value="ECO:0007669"/>
    <property type="project" value="Ensembl"/>
</dbReference>
<dbReference type="GO" id="GO:0000122">
    <property type="term" value="P:negative regulation of transcription by RNA polymerase II"/>
    <property type="evidence" value="ECO:0000314"/>
    <property type="project" value="ComplexPortal"/>
</dbReference>
<dbReference type="GO" id="GO:0002076">
    <property type="term" value="P:osteoblast development"/>
    <property type="evidence" value="ECO:0007669"/>
    <property type="project" value="Ensembl"/>
</dbReference>
<dbReference type="GO" id="GO:0043032">
    <property type="term" value="P:positive regulation of macrophage activation"/>
    <property type="evidence" value="ECO:0007669"/>
    <property type="project" value="Ensembl"/>
</dbReference>
<dbReference type="GO" id="GO:0045669">
    <property type="term" value="P:positive regulation of osteoblast differentiation"/>
    <property type="evidence" value="ECO:0007669"/>
    <property type="project" value="Ensembl"/>
</dbReference>
<dbReference type="GO" id="GO:0035360">
    <property type="term" value="P:positive regulation of peroxisome proliferator activated receptor signaling pathway"/>
    <property type="evidence" value="ECO:0007669"/>
    <property type="project" value="Ensembl"/>
</dbReference>
<dbReference type="GO" id="GO:0045944">
    <property type="term" value="P:positive regulation of transcription by RNA polymerase II"/>
    <property type="evidence" value="ECO:0000314"/>
    <property type="project" value="CAFA"/>
</dbReference>
<dbReference type="GO" id="GO:0051726">
    <property type="term" value="P:regulation of cell cycle"/>
    <property type="evidence" value="ECO:0000318"/>
    <property type="project" value="GO_Central"/>
</dbReference>
<dbReference type="GO" id="GO:0042127">
    <property type="term" value="P:regulation of cell population proliferation"/>
    <property type="evidence" value="ECO:0000318"/>
    <property type="project" value="GO_Central"/>
</dbReference>
<dbReference type="GO" id="GO:0006357">
    <property type="term" value="P:regulation of transcription by RNA polymerase II"/>
    <property type="evidence" value="ECO:0000304"/>
    <property type="project" value="ProtInc"/>
</dbReference>
<dbReference type="GO" id="GO:0009416">
    <property type="term" value="P:response to light stimulus"/>
    <property type="evidence" value="ECO:0007669"/>
    <property type="project" value="Ensembl"/>
</dbReference>
<dbReference type="GO" id="GO:0032496">
    <property type="term" value="P:response to lipopolysaccharide"/>
    <property type="evidence" value="ECO:0007669"/>
    <property type="project" value="Ensembl"/>
</dbReference>
<dbReference type="GO" id="GO:0009612">
    <property type="term" value="P:response to mechanical stimulus"/>
    <property type="evidence" value="ECO:0007669"/>
    <property type="project" value="Ensembl"/>
</dbReference>
<dbReference type="GO" id="GO:0043434">
    <property type="term" value="P:response to peptide hormone"/>
    <property type="evidence" value="ECO:0007669"/>
    <property type="project" value="Ensembl"/>
</dbReference>
<dbReference type="GO" id="GO:0048545">
    <property type="term" value="P:response to steroid hormone"/>
    <property type="evidence" value="ECO:0000318"/>
    <property type="project" value="GO_Central"/>
</dbReference>
<dbReference type="GO" id="GO:0006366">
    <property type="term" value="P:transcription by RNA polymerase II"/>
    <property type="evidence" value="ECO:0007669"/>
    <property type="project" value="Ensembl"/>
</dbReference>
<dbReference type="CDD" id="cd14696">
    <property type="entry name" value="bZIP_Jun"/>
    <property type="match status" value="1"/>
</dbReference>
<dbReference type="FunFam" id="1.20.5.170:FF:000012">
    <property type="entry name" value="Putative transcription factor AP-1"/>
    <property type="match status" value="1"/>
</dbReference>
<dbReference type="Gene3D" id="1.20.5.170">
    <property type="match status" value="1"/>
</dbReference>
<dbReference type="IDEAL" id="IID00542"/>
<dbReference type="InterPro" id="IPR050946">
    <property type="entry name" value="AP-1_TF_bZIP"/>
</dbReference>
<dbReference type="InterPro" id="IPR004827">
    <property type="entry name" value="bZIP"/>
</dbReference>
<dbReference type="InterPro" id="IPR046347">
    <property type="entry name" value="bZIP_sf"/>
</dbReference>
<dbReference type="InterPro" id="IPR005643">
    <property type="entry name" value="JNK"/>
</dbReference>
<dbReference type="InterPro" id="IPR002112">
    <property type="entry name" value="Leuzip_Jun"/>
</dbReference>
<dbReference type="InterPro" id="IPR008917">
    <property type="entry name" value="TF_DNA-bd_sf"/>
</dbReference>
<dbReference type="PANTHER" id="PTHR11462">
    <property type="entry name" value="JUN TRANSCRIPTION FACTOR-RELATED"/>
    <property type="match status" value="1"/>
</dbReference>
<dbReference type="PANTHER" id="PTHR11462:SF7">
    <property type="entry name" value="TRANSCRIPTION FACTOR JUND"/>
    <property type="match status" value="1"/>
</dbReference>
<dbReference type="Pfam" id="PF00170">
    <property type="entry name" value="bZIP_1"/>
    <property type="match status" value="1"/>
</dbReference>
<dbReference type="Pfam" id="PF03957">
    <property type="entry name" value="Jun"/>
    <property type="match status" value="1"/>
</dbReference>
<dbReference type="PRINTS" id="PR00043">
    <property type="entry name" value="LEUZIPPRJUN"/>
</dbReference>
<dbReference type="SMART" id="SM00338">
    <property type="entry name" value="BRLZ"/>
    <property type="match status" value="1"/>
</dbReference>
<dbReference type="SUPFAM" id="SSF47454">
    <property type="entry name" value="A DNA-binding domain in eukaryotic transcription factors"/>
    <property type="match status" value="1"/>
</dbReference>
<dbReference type="SUPFAM" id="SSF57959">
    <property type="entry name" value="Leucine zipper domain"/>
    <property type="match status" value="1"/>
</dbReference>
<dbReference type="PROSITE" id="PS50217">
    <property type="entry name" value="BZIP"/>
    <property type="match status" value="1"/>
</dbReference>
<dbReference type="PROSITE" id="PS00036">
    <property type="entry name" value="BZIP_BASIC"/>
    <property type="match status" value="1"/>
</dbReference>
<protein>
    <recommendedName>
        <fullName evidence="8">Transcription factor JunD</fullName>
    </recommendedName>
    <alternativeName>
        <fullName evidence="8">Transcription factor AP-1 subunit JunD</fullName>
    </alternativeName>
</protein>
<name>JUND_HUMAN</name>
<reference key="1">
    <citation type="journal article" date="1991" name="Oncogene">
        <title>Structure and function of human jun-D.</title>
        <authorList>
            <person name="Berger I."/>
            <person name="Shaul Y."/>
        </authorList>
    </citation>
    <scope>NUCLEOTIDE SEQUENCE [MRNA]</scope>
</reference>
<reference key="2">
    <citation type="submission" date="2006-10" db="EMBL/GenBank/DDBJ databases">
        <authorList>
            <consortium name="NIEHS SNPs program"/>
        </authorList>
    </citation>
    <scope>NUCLEOTIDE SEQUENCE [GENOMIC DNA]</scope>
    <scope>VARIANT VAL-20</scope>
</reference>
<reference key="3">
    <citation type="submission" date="2005-04" db="EMBL/GenBank/DDBJ databases">
        <authorList>
            <person name="Totoki Y."/>
            <person name="Toyoda A."/>
            <person name="Takeda T."/>
            <person name="Sakaki Y."/>
            <person name="Tanaka A."/>
            <person name="Yokoyama S."/>
        </authorList>
    </citation>
    <scope>NUCLEOTIDE SEQUENCE [LARGE SCALE MRNA]</scope>
    <source>
        <tissue>Spleen</tissue>
    </source>
</reference>
<reference key="4">
    <citation type="submission" date="2005-07" db="EMBL/GenBank/DDBJ databases">
        <authorList>
            <person name="Mural R.J."/>
            <person name="Istrail S."/>
            <person name="Sutton G.G."/>
            <person name="Florea L."/>
            <person name="Halpern A.L."/>
            <person name="Mobarry C.M."/>
            <person name="Lippert R."/>
            <person name="Walenz B."/>
            <person name="Shatkay H."/>
            <person name="Dew I."/>
            <person name="Miller J.R."/>
            <person name="Flanigan M.J."/>
            <person name="Edwards N.J."/>
            <person name="Bolanos R."/>
            <person name="Fasulo D."/>
            <person name="Halldorsson B.V."/>
            <person name="Hannenhalli S."/>
            <person name="Turner R."/>
            <person name="Yooseph S."/>
            <person name="Lu F."/>
            <person name="Nusskern D.R."/>
            <person name="Shue B.C."/>
            <person name="Zheng X.H."/>
            <person name="Zhong F."/>
            <person name="Delcher A.L."/>
            <person name="Huson D.H."/>
            <person name="Kravitz S.A."/>
            <person name="Mouchard L."/>
            <person name="Reinert K."/>
            <person name="Remington K.A."/>
            <person name="Clark A.G."/>
            <person name="Waterman M.S."/>
            <person name="Eichler E.E."/>
            <person name="Adams M.D."/>
            <person name="Hunkapiller M.W."/>
            <person name="Myers E.W."/>
            <person name="Venter J.C."/>
        </authorList>
    </citation>
    <scope>NUCLEOTIDE SEQUENCE [LARGE SCALE GENOMIC DNA]</scope>
</reference>
<reference key="5">
    <citation type="journal article" date="1990" name="Nucleic Acids Res.">
        <title>Isolation of human cDNA clones of jun-related genes, jun-B and jun-D.</title>
        <authorList>
            <person name="Nomura N."/>
            <person name="Ide M."/>
            <person name="Sasamoto S."/>
            <person name="Matsui M."/>
            <person name="Date T."/>
            <person name="Ishizaki R."/>
        </authorList>
    </citation>
    <scope>NUCLEOTIDE SEQUENCE [MRNA] OF 45-347</scope>
</reference>
<reference key="6">
    <citation type="journal article" date="1999" name="Cell">
        <title>Menin interacts with the AP1 transcription factor JunD and represses JunD-activated transcription.</title>
        <authorList>
            <person name="Agarwal S.K."/>
            <person name="Guru S.C."/>
            <person name="Heppner C."/>
            <person name="Erdos M.R."/>
            <person name="Collins R.M."/>
            <person name="Park S.Y."/>
            <person name="Saggar S."/>
            <person name="Chandrasekharappa S.C."/>
            <person name="Collins F.S."/>
            <person name="Spiegel A.M."/>
            <person name="Marx S.J."/>
            <person name="Burns A.L."/>
        </authorList>
    </citation>
    <scope>FUNCTION</scope>
    <scope>INTERACTION WITH MEN1</scope>
</reference>
<reference key="7">
    <citation type="journal article" date="2008" name="Proc. Natl. Acad. Sci. U.S.A.">
        <title>A quantitative atlas of mitotic phosphorylation.</title>
        <authorList>
            <person name="Dephoure N."/>
            <person name="Zhou C."/>
            <person name="Villen J."/>
            <person name="Beausoleil S.A."/>
            <person name="Bakalarski C.E."/>
            <person name="Elledge S.J."/>
            <person name="Gygi S.P."/>
        </authorList>
    </citation>
    <scope>PHOSPHORYLATION [LARGE SCALE ANALYSIS] AT SER-251; SER-255 AND SER-259</scope>
    <scope>IDENTIFICATION BY MASS SPECTROMETRY [LARGE SCALE ANALYSIS]</scope>
    <source>
        <tissue>Cervix carcinoma</tissue>
    </source>
</reference>
<reference key="8">
    <citation type="journal article" date="2009" name="Mol. Cell. Proteomics">
        <title>Large-scale proteomics analysis of the human kinome.</title>
        <authorList>
            <person name="Oppermann F.S."/>
            <person name="Gnad F."/>
            <person name="Olsen J.V."/>
            <person name="Hornberger R."/>
            <person name="Greff Z."/>
            <person name="Keri G."/>
            <person name="Mann M."/>
            <person name="Daub H."/>
        </authorList>
    </citation>
    <scope>PHOSPHORYLATION [LARGE SCALE ANALYSIS] AT SER-255 AND SER-259</scope>
    <scope>IDENTIFICATION BY MASS SPECTROMETRY [LARGE SCALE ANALYSIS]</scope>
</reference>
<reference key="9">
    <citation type="journal article" date="2009" name="Sci. Signal.">
        <title>Quantitative phosphoproteomic analysis of T cell receptor signaling reveals system-wide modulation of protein-protein interactions.</title>
        <authorList>
            <person name="Mayya V."/>
            <person name="Lundgren D.H."/>
            <person name="Hwang S.-I."/>
            <person name="Rezaul K."/>
            <person name="Wu L."/>
            <person name="Eng J.K."/>
            <person name="Rodionov V."/>
            <person name="Han D.K."/>
        </authorList>
    </citation>
    <scope>PHOSPHORYLATION [LARGE SCALE ANALYSIS] AT SER-255 AND SER-259</scope>
    <scope>IDENTIFICATION BY MASS SPECTROMETRY [LARGE SCALE ANALYSIS]</scope>
    <source>
        <tissue>Leukemic T-cell</tissue>
    </source>
</reference>
<reference key="10">
    <citation type="journal article" date="2010" name="Sci. Signal.">
        <title>Quantitative phosphoproteomics reveals widespread full phosphorylation site occupancy during mitosis.</title>
        <authorList>
            <person name="Olsen J.V."/>
            <person name="Vermeulen M."/>
            <person name="Santamaria A."/>
            <person name="Kumar C."/>
            <person name="Miller M.L."/>
            <person name="Jensen L.J."/>
            <person name="Gnad F."/>
            <person name="Cox J."/>
            <person name="Jensen T.S."/>
            <person name="Nigg E.A."/>
            <person name="Brunak S."/>
            <person name="Mann M."/>
        </authorList>
    </citation>
    <scope>PHOSPHORYLATION [LARGE SCALE ANALYSIS] AT SER-259</scope>
    <scope>IDENTIFICATION BY MASS SPECTROMETRY [LARGE SCALE ANALYSIS]</scope>
    <source>
        <tissue>Cervix carcinoma</tissue>
    </source>
</reference>
<reference key="11">
    <citation type="journal article" date="2013" name="J. Proteome Res.">
        <title>Toward a comprehensive characterization of a human cancer cell phosphoproteome.</title>
        <authorList>
            <person name="Zhou H."/>
            <person name="Di Palma S."/>
            <person name="Preisinger C."/>
            <person name="Peng M."/>
            <person name="Polat A.N."/>
            <person name="Heck A.J."/>
            <person name="Mohammed S."/>
        </authorList>
    </citation>
    <scope>PHOSPHORYLATION [LARGE SCALE ANALYSIS] AT SER-255</scope>
    <scope>IDENTIFICATION BY MASS SPECTROMETRY [LARGE SCALE ANALYSIS]</scope>
    <source>
        <tissue>Erythroleukemia</tissue>
    </source>
</reference>
<reference evidence="9" key="12">
    <citation type="journal article" date="2012" name="Nature">
        <title>The same pocket in menin binds both MLL and JUND but has opposite effects on transcription.</title>
        <authorList>
            <person name="Huang J."/>
            <person name="Gurung B."/>
            <person name="Wan B."/>
            <person name="Matkar S."/>
            <person name="Veniaminova N.A."/>
            <person name="Wan K."/>
            <person name="Merchant J.L."/>
            <person name="Hua X."/>
            <person name="Lei M."/>
        </authorList>
    </citation>
    <scope>X-RAY CRYSTALLOGRAPHY (2.84 ANGSTROMS) OF 27-39 IN COMPLEX WITH MEN1</scope>
    <scope>INTERACTION WITH MEN1 AND MAPK10</scope>
    <scope>DOMAIN MENIN-BINDING AND MAP KINASE DOCKING MOTIFS</scope>
    <scope>MUTAGENESIS OF ARG-30; LEU-31; PHE-32; PRO-33; GLY-34; ALA-35; PRO-36; PRO-37; LYS-46; LYS-47; LEU-52 AND LEU-54</scope>
    <scope>PHOSPHORYLATION AT SER-90; SER-100 AND THR-117</scope>
</reference>
<reference evidence="10 11 12 13 14 15" key="13">
    <citation type="journal article" date="2017" name="Nucleic Acids Res.">
        <title>Activator Protein-1: redox switch controlling structure and DNA-binding.</title>
        <authorList>
            <person name="Yin Z."/>
            <person name="Machius M."/>
            <person name="Nestler E.J."/>
            <person name="Rudenko G."/>
        </authorList>
    </citation>
    <scope>X-RAY CRYSTALLOGRAPHY (2.05 ANGSTROMS) OF 266-332 IN COMPLEX WITH FOSB AND DNA</scope>
    <scope>FUNCTION</scope>
    <scope>SUBUNIT</scope>
    <scope>INTERACTION WITH FOSB</scope>
    <scope>DOMAIN</scope>
    <scope>DISULFIDE BOND</scope>
</reference>
<keyword id="KW-0002">3D-structure</keyword>
<keyword id="KW-0010">Activator</keyword>
<keyword id="KW-1015">Disulfide bond</keyword>
<keyword id="KW-0238">DNA-binding</keyword>
<keyword id="KW-0539">Nucleus</keyword>
<keyword id="KW-0597">Phosphoprotein</keyword>
<keyword id="KW-1267">Proteomics identification</keyword>
<keyword id="KW-1185">Reference proteome</keyword>
<keyword id="KW-0804">Transcription</keyword>
<keyword id="KW-0805">Transcription regulation</keyword>
<organism>
    <name type="scientific">Homo sapiens</name>
    <name type="common">Human</name>
    <dbReference type="NCBI Taxonomy" id="9606"/>
    <lineage>
        <taxon>Eukaryota</taxon>
        <taxon>Metazoa</taxon>
        <taxon>Chordata</taxon>
        <taxon>Craniata</taxon>
        <taxon>Vertebrata</taxon>
        <taxon>Euteleostomi</taxon>
        <taxon>Mammalia</taxon>
        <taxon>Eutheria</taxon>
        <taxon>Euarchontoglires</taxon>
        <taxon>Primates</taxon>
        <taxon>Haplorrhini</taxon>
        <taxon>Catarrhini</taxon>
        <taxon>Hominidae</taxon>
        <taxon>Homo</taxon>
    </lineage>
</organism>
<gene>
    <name type="primary">JUND</name>
</gene>
<proteinExistence type="evidence at protein level"/>
<comment type="function">
    <text evidence="5 6">Transcription factor binding AP-1 sites (PubMed:9989505). Heterodimerizes with proteins of the FOS family to form an AP-1 transcription factor complex, thereby enhancing their DNA binding activity to an AP-1 consensus sequence 3'-TGA[GC]TCA-5' and enhancing their transcriptional activity (PubMed:28981703, PubMed:9989505).</text>
</comment>
<comment type="subunit">
    <text evidence="1 4 5 6">Heterodimer; binds DNA as a heterodimer (PubMed:28981703). Component of an AP-1 transcription factor complex composed of JUN-FOS heterodimers (By similarity). As part of the AP-1 transcription factor complex, forms heterodimers with FOS proteins, thereby binding to the AP-1 consensus sequence and stimulating transcription (By similarity). Forms heterodimers with FOSB; thereby binding to the AP-1 consensus sequence (PubMed:28981703). Interacts (via MBM motif) with MEN1; this interaction represses transcriptional activation (PubMed:22327296, PubMed:9989505). Interacts with MAPK10; this interaction is inhibited in the presence of MEN1 (PubMed:22327296).</text>
</comment>
<comment type="interaction">
    <interactant intactId="EBI-2682803">
        <id>P17535</id>
    </interactant>
    <interactant intactId="EBI-351428">
        <id>P61158</id>
        <label>ACTR3</label>
    </interactant>
    <organismsDiffer>false</organismsDiffer>
    <experiments>2</experiments>
</comment>
<comment type="interaction">
    <interactant intactId="EBI-2682803">
        <id>P17535</id>
    </interactant>
    <interactant intactId="EBI-77613">
        <id>P05067</id>
        <label>APP</label>
    </interactant>
    <organismsDiffer>false</organismsDiffer>
    <experiments>3</experiments>
</comment>
<comment type="interaction">
    <interactant intactId="EBI-2682803">
        <id>P17535</id>
    </interactant>
    <interactant intactId="EBI-1170906">
        <id>P15336</id>
        <label>ATF2</label>
    </interactant>
    <organismsDiffer>false</organismsDiffer>
    <experiments>6</experiments>
</comment>
<comment type="interaction">
    <interactant intactId="EBI-2682803">
        <id>P17535</id>
    </interactant>
    <interactant intactId="EBI-712767">
        <id>P18847</id>
        <label>ATF3</label>
    </interactant>
    <organismsDiffer>false</organismsDiffer>
    <experiments>3</experiments>
</comment>
<comment type="interaction">
    <interactant intactId="EBI-2682803">
        <id>P17535</id>
    </interactant>
    <interactant intactId="EBI-765623">
        <id>P17544</id>
        <label>ATF7</label>
    </interactant>
    <organismsDiffer>false</organismsDiffer>
    <experiments>2</experiments>
</comment>
<comment type="interaction">
    <interactant intactId="EBI-2682803">
        <id>P17535</id>
    </interactant>
    <interactant intactId="EBI-749503">
        <id>Q16520</id>
        <label>BATF</label>
    </interactant>
    <organismsDiffer>false</organismsDiffer>
    <experiments>2</experiments>
</comment>
<comment type="interaction">
    <interactant intactId="EBI-2682803">
        <id>P17535</id>
    </interactant>
    <interactant intactId="EBI-10312707">
        <id>Q9NR55</id>
        <label>BATF3</label>
    </interactant>
    <organismsDiffer>false</organismsDiffer>
    <experiments>5</experiments>
</comment>
<comment type="interaction">
    <interactant intactId="EBI-2682803">
        <id>P17535</id>
    </interactant>
    <interactant intactId="EBI-852851">
        <id>P01100</id>
        <label>FOS</label>
    </interactant>
    <organismsDiffer>false</organismsDiffer>
    <experiments>14</experiments>
</comment>
<comment type="interaction">
    <interactant intactId="EBI-2682803">
        <id>P17535</id>
    </interactant>
    <interactant intactId="EBI-3893419">
        <id>P15408</id>
        <label>FOSL2</label>
    </interactant>
    <organismsDiffer>false</organismsDiffer>
    <experiments>6</experiments>
</comment>
<comment type="interaction">
    <interactant intactId="EBI-2682803">
        <id>P17535</id>
    </interactant>
    <interactant intactId="EBI-713543">
        <id>P53779</id>
        <label>MAPK10</label>
    </interactant>
    <organismsDiffer>false</organismsDiffer>
    <experiments>2</experiments>
</comment>
<comment type="interaction">
    <interactant intactId="EBI-2682803">
        <id>P17535</id>
    </interactant>
    <interactant intactId="EBI-389668">
        <id>Q00987</id>
        <label>MDM2</label>
    </interactant>
    <organismsDiffer>false</organismsDiffer>
    <experiments>3</experiments>
</comment>
<comment type="interaction">
    <interactant intactId="EBI-2682803">
        <id>P17535</id>
    </interactant>
    <interactant intactId="EBI-9869387">
        <id>O00255-2</id>
        <label>MEN1</label>
    </interactant>
    <organismsDiffer>false</organismsDiffer>
    <experiments>6</experiments>
</comment>
<comment type="interaction">
    <interactant intactId="EBI-2682803">
        <id>P17535</id>
    </interactant>
    <interactant intactId="EBI-10890294">
        <id>P0C746</id>
        <label>HBZ</label>
    </interactant>
    <organismsDiffer>true</organismsDiffer>
    <experiments>2</experiments>
</comment>
<comment type="interaction">
    <interactant intactId="EBI-2682803">
        <id>P17535</id>
    </interactant>
    <interactant intactId="EBI-10889526">
        <id>Q9DGW5</id>
        <label>MDV005</label>
    </interactant>
    <organismsDiffer>true</organismsDiffer>
    <experiments>2</experiments>
</comment>
<comment type="subcellular location">
    <subcellularLocation>
        <location>Nucleus</location>
    </subcellularLocation>
</comment>
<comment type="domain">
    <text evidence="5">Binds DNA via bZIP domain; DNA-binding is under control of cellular redox homeostasis (in vitro) (PubMed:28981703). To enable DNA binding, the bZIP domain must undergo a conformational rearrangement which requires the reduction of the interchain disulfide bond between FosB and JunD (in vitro) (PubMed:28981703).</text>
</comment>
<comment type="PTM">
    <text evidence="4">Phosphorylated by MAP kinases MAPK8 and MAPK10; phosphorylation is inhibited in the presence of MEN1.</text>
</comment>
<comment type="similarity">
    <text evidence="8">Belongs to the bZIP family. Jun subfamily.</text>
</comment>
<comment type="sequence caution" evidence="8">
    <conflict type="frameshift">
        <sequence resource="EMBL-CDS" id="CAA40010"/>
    </conflict>
</comment>
<comment type="online information" name="Atlas of Genetics and Cytogenetics in Oncology and Haematology">
    <link uri="https://atlasgeneticsoncology.org/gene/179/JUND"/>
</comment>